<feature type="chain" id="PRO_1000078476" description="Large ribosomal subunit protein bL36">
    <location>
        <begin position="1"/>
        <end position="37"/>
    </location>
</feature>
<comment type="similarity">
    <text evidence="1">Belongs to the bacterial ribosomal protein bL36 family.</text>
</comment>
<protein>
    <recommendedName>
        <fullName evidence="1">Large ribosomal subunit protein bL36</fullName>
    </recommendedName>
    <alternativeName>
        <fullName evidence="2">50S ribosomal protein L36</fullName>
    </alternativeName>
</protein>
<dbReference type="EMBL" id="CP000947">
    <property type="protein sequence ID" value="ACA31770.1"/>
    <property type="molecule type" value="Genomic_DNA"/>
</dbReference>
<dbReference type="RefSeq" id="WP_005625868.1">
    <property type="nucleotide sequence ID" value="NC_010519.1"/>
</dbReference>
<dbReference type="SMR" id="B0UX35"/>
<dbReference type="STRING" id="228400.HSM_1974"/>
<dbReference type="GeneID" id="93298810"/>
<dbReference type="KEGG" id="hsm:HSM_1974"/>
<dbReference type="HOGENOM" id="CLU_135723_6_2_6"/>
<dbReference type="GO" id="GO:0005737">
    <property type="term" value="C:cytoplasm"/>
    <property type="evidence" value="ECO:0007669"/>
    <property type="project" value="UniProtKB-ARBA"/>
</dbReference>
<dbReference type="GO" id="GO:1990904">
    <property type="term" value="C:ribonucleoprotein complex"/>
    <property type="evidence" value="ECO:0007669"/>
    <property type="project" value="UniProtKB-KW"/>
</dbReference>
<dbReference type="GO" id="GO:0005840">
    <property type="term" value="C:ribosome"/>
    <property type="evidence" value="ECO:0007669"/>
    <property type="project" value="UniProtKB-KW"/>
</dbReference>
<dbReference type="GO" id="GO:0003735">
    <property type="term" value="F:structural constituent of ribosome"/>
    <property type="evidence" value="ECO:0007669"/>
    <property type="project" value="InterPro"/>
</dbReference>
<dbReference type="GO" id="GO:0006412">
    <property type="term" value="P:translation"/>
    <property type="evidence" value="ECO:0007669"/>
    <property type="project" value="UniProtKB-UniRule"/>
</dbReference>
<dbReference type="HAMAP" id="MF_00251">
    <property type="entry name" value="Ribosomal_bL36"/>
    <property type="match status" value="1"/>
</dbReference>
<dbReference type="InterPro" id="IPR000473">
    <property type="entry name" value="Ribosomal_bL36"/>
</dbReference>
<dbReference type="InterPro" id="IPR035977">
    <property type="entry name" value="Ribosomal_bL36_sp"/>
</dbReference>
<dbReference type="NCBIfam" id="TIGR01022">
    <property type="entry name" value="rpmJ_bact"/>
    <property type="match status" value="1"/>
</dbReference>
<dbReference type="PANTHER" id="PTHR42888">
    <property type="entry name" value="50S RIBOSOMAL PROTEIN L36, CHLOROPLASTIC"/>
    <property type="match status" value="1"/>
</dbReference>
<dbReference type="PANTHER" id="PTHR42888:SF1">
    <property type="entry name" value="LARGE RIBOSOMAL SUBUNIT PROTEIN BL36C"/>
    <property type="match status" value="1"/>
</dbReference>
<dbReference type="Pfam" id="PF00444">
    <property type="entry name" value="Ribosomal_L36"/>
    <property type="match status" value="1"/>
</dbReference>
<dbReference type="SUPFAM" id="SSF57840">
    <property type="entry name" value="Ribosomal protein L36"/>
    <property type="match status" value="1"/>
</dbReference>
<dbReference type="PROSITE" id="PS00828">
    <property type="entry name" value="RIBOSOMAL_L36"/>
    <property type="match status" value="1"/>
</dbReference>
<sequence>MKVRASVKKMCRNCKIVKREGVVRVLCSDPKHKQRQG</sequence>
<reference key="1">
    <citation type="submission" date="2008-02" db="EMBL/GenBank/DDBJ databases">
        <title>Complete sequence of Haemophilus somnus 2336.</title>
        <authorList>
            <consortium name="US DOE Joint Genome Institute"/>
            <person name="Siddaramappa S."/>
            <person name="Duncan A.J."/>
            <person name="Challacombe J.F."/>
            <person name="Rainey D."/>
            <person name="Gillaspy A.F."/>
            <person name="Carson M."/>
            <person name="Gipson J."/>
            <person name="Gipson M."/>
            <person name="Bruce D."/>
            <person name="Detter J.C."/>
            <person name="Han C.S."/>
            <person name="Land M."/>
            <person name="Tapia R."/>
            <person name="Thompson L.S."/>
            <person name="Orvis J."/>
            <person name="Zaitshik J."/>
            <person name="Barnes G."/>
            <person name="Brettin T.S."/>
            <person name="Dyer D.W."/>
            <person name="Inzana T.J."/>
        </authorList>
    </citation>
    <scope>NUCLEOTIDE SEQUENCE [LARGE SCALE GENOMIC DNA]</scope>
    <source>
        <strain>2336</strain>
    </source>
</reference>
<accession>B0UX35</accession>
<proteinExistence type="inferred from homology"/>
<name>RL36_HISS2</name>
<gene>
    <name evidence="1" type="primary">rpmJ</name>
    <name type="ordered locus">HSM_1974</name>
</gene>
<keyword id="KW-0687">Ribonucleoprotein</keyword>
<keyword id="KW-0689">Ribosomal protein</keyword>
<organism>
    <name type="scientific">Histophilus somni (strain 2336)</name>
    <name type="common">Haemophilus somnus</name>
    <dbReference type="NCBI Taxonomy" id="228400"/>
    <lineage>
        <taxon>Bacteria</taxon>
        <taxon>Pseudomonadati</taxon>
        <taxon>Pseudomonadota</taxon>
        <taxon>Gammaproteobacteria</taxon>
        <taxon>Pasteurellales</taxon>
        <taxon>Pasteurellaceae</taxon>
        <taxon>Histophilus</taxon>
    </lineage>
</organism>
<evidence type="ECO:0000255" key="1">
    <source>
        <dbReference type="HAMAP-Rule" id="MF_00251"/>
    </source>
</evidence>
<evidence type="ECO:0000305" key="2"/>